<dbReference type="EMBL" id="CP001158">
    <property type="protein sequence ID" value="ACL30066.1"/>
    <property type="molecule type" value="Genomic_DNA"/>
</dbReference>
<dbReference type="RefSeq" id="WP_009874208.1">
    <property type="nucleotide sequence ID" value="NC_011834.1"/>
</dbReference>
<dbReference type="SMR" id="B8D7F1"/>
<dbReference type="KEGG" id="bau:BUAPTUC7_251"/>
<dbReference type="HOGENOM" id="CLU_108953_3_0_6"/>
<dbReference type="GO" id="GO:0005829">
    <property type="term" value="C:cytosol"/>
    <property type="evidence" value="ECO:0007669"/>
    <property type="project" value="TreeGrafter"/>
</dbReference>
<dbReference type="GO" id="GO:0003723">
    <property type="term" value="F:RNA binding"/>
    <property type="evidence" value="ECO:0007669"/>
    <property type="project" value="UniProtKB-UniRule"/>
</dbReference>
<dbReference type="GO" id="GO:0070929">
    <property type="term" value="P:trans-translation"/>
    <property type="evidence" value="ECO:0007669"/>
    <property type="project" value="UniProtKB-UniRule"/>
</dbReference>
<dbReference type="CDD" id="cd09294">
    <property type="entry name" value="SmpB"/>
    <property type="match status" value="1"/>
</dbReference>
<dbReference type="Gene3D" id="2.40.280.10">
    <property type="match status" value="1"/>
</dbReference>
<dbReference type="HAMAP" id="MF_00023">
    <property type="entry name" value="SmpB"/>
    <property type="match status" value="1"/>
</dbReference>
<dbReference type="InterPro" id="IPR023620">
    <property type="entry name" value="SmpB"/>
</dbReference>
<dbReference type="InterPro" id="IPR000037">
    <property type="entry name" value="SsrA-bd_prot"/>
</dbReference>
<dbReference type="InterPro" id="IPR020081">
    <property type="entry name" value="SsrA-bd_prot_CS"/>
</dbReference>
<dbReference type="NCBIfam" id="NF003843">
    <property type="entry name" value="PRK05422.1"/>
    <property type="match status" value="1"/>
</dbReference>
<dbReference type="NCBIfam" id="TIGR00086">
    <property type="entry name" value="smpB"/>
    <property type="match status" value="1"/>
</dbReference>
<dbReference type="PANTHER" id="PTHR30308:SF2">
    <property type="entry name" value="SSRA-BINDING PROTEIN"/>
    <property type="match status" value="1"/>
</dbReference>
<dbReference type="PANTHER" id="PTHR30308">
    <property type="entry name" value="TMRNA-BINDING COMPONENT OF TRANS-TRANSLATION TAGGING COMPLEX"/>
    <property type="match status" value="1"/>
</dbReference>
<dbReference type="Pfam" id="PF01668">
    <property type="entry name" value="SmpB"/>
    <property type="match status" value="1"/>
</dbReference>
<dbReference type="SUPFAM" id="SSF74982">
    <property type="entry name" value="Small protein B (SmpB)"/>
    <property type="match status" value="1"/>
</dbReference>
<dbReference type="PROSITE" id="PS01317">
    <property type="entry name" value="SSRP"/>
    <property type="match status" value="1"/>
</dbReference>
<name>SSRP_BUCAT</name>
<accession>B8D7F1</accession>
<sequence>MLQKKKYQKKSSKIIINKKAYYNYFIEKVFQSGLVLEGWEIKSIRSGKVNISESYIINDRNEMYLCNCLIEPLQMSSNRFSCDPTRKKKLLLHKNEIDFLSLKKKNTGYTMVSLSLFWKKSWCKLEFGLAKGKTAQDKRINLKKREWEQEKLKILKKTKETY</sequence>
<feature type="chain" id="PRO_1000197611" description="SsrA-binding protein">
    <location>
        <begin position="1"/>
        <end position="162"/>
    </location>
</feature>
<proteinExistence type="inferred from homology"/>
<comment type="function">
    <text evidence="1">Required for rescue of stalled ribosomes mediated by trans-translation. Binds to transfer-messenger RNA (tmRNA), required for stable association of tmRNA with ribosomes. tmRNA and SmpB together mimic tRNA shape, replacing the anticodon stem-loop with SmpB. tmRNA is encoded by the ssrA gene; the 2 termini fold to resemble tRNA(Ala) and it encodes a 'tag peptide', a short internal open reading frame. During trans-translation Ala-aminoacylated tmRNA acts like a tRNA, entering the A-site of stalled ribosomes, displacing the stalled mRNA. The ribosome then switches to translate the ORF on the tmRNA; the nascent peptide is terminated with the 'tag peptide' encoded by the tmRNA and targeted for degradation. The ribosome is freed to recommence translation, which seems to be the essential function of trans-translation.</text>
</comment>
<comment type="subcellular location">
    <subcellularLocation>
        <location evidence="1">Cytoplasm</location>
    </subcellularLocation>
    <text evidence="1">The tmRNA-SmpB complex associates with stalled 70S ribosomes.</text>
</comment>
<comment type="similarity">
    <text evidence="1">Belongs to the SmpB family.</text>
</comment>
<keyword id="KW-0963">Cytoplasm</keyword>
<keyword id="KW-0694">RNA-binding</keyword>
<evidence type="ECO:0000255" key="1">
    <source>
        <dbReference type="HAMAP-Rule" id="MF_00023"/>
    </source>
</evidence>
<organism>
    <name type="scientific">Buchnera aphidicola subsp. Acyrthosiphon pisum (strain Tuc7)</name>
    <dbReference type="NCBI Taxonomy" id="561501"/>
    <lineage>
        <taxon>Bacteria</taxon>
        <taxon>Pseudomonadati</taxon>
        <taxon>Pseudomonadota</taxon>
        <taxon>Gammaproteobacteria</taxon>
        <taxon>Enterobacterales</taxon>
        <taxon>Erwiniaceae</taxon>
        <taxon>Buchnera</taxon>
    </lineage>
</organism>
<reference key="1">
    <citation type="journal article" date="2009" name="Science">
        <title>The dynamics and time scale of ongoing genomic erosion in symbiotic bacteria.</title>
        <authorList>
            <person name="Moran N.A."/>
            <person name="McLaughlin H.J."/>
            <person name="Sorek R."/>
        </authorList>
    </citation>
    <scope>NUCLEOTIDE SEQUENCE [LARGE SCALE GENOMIC DNA]</scope>
    <source>
        <strain>Tuc7</strain>
    </source>
</reference>
<protein>
    <recommendedName>
        <fullName evidence="1">SsrA-binding protein</fullName>
    </recommendedName>
    <alternativeName>
        <fullName evidence="1">Small protein B</fullName>
    </alternativeName>
</protein>
<gene>
    <name evidence="1" type="primary">smpB</name>
    <name type="ordered locus">BUAPTUC7_251</name>
</gene>